<feature type="signal peptide" evidence="2">
    <location>
        <begin position="1"/>
        <end position="23"/>
    </location>
</feature>
<feature type="chain" id="PRO_0000352709" description="Beta-defensin 29">
    <location>
        <begin position="24"/>
        <end position="78"/>
    </location>
</feature>
<feature type="disulfide bond" evidence="1">
    <location>
        <begin position="40"/>
        <end position="67"/>
    </location>
</feature>
<feature type="disulfide bond" evidence="1">
    <location>
        <begin position="47"/>
        <end position="61"/>
    </location>
</feature>
<feature type="disulfide bond" evidence="1">
    <location>
        <begin position="51"/>
        <end position="68"/>
    </location>
</feature>
<reference key="1">
    <citation type="journal article" date="2005" name="Physiol. Genomics">
        <title>Cross-species analysis of the mammalian beta-defensin gene family: presence of syntenic gene clusters and preferential expression in the male reproductive tract.</title>
        <authorList>
            <person name="Patil A.A."/>
            <person name="Cai Y."/>
            <person name="Sang Y."/>
            <person name="Blecha F."/>
            <person name="Zhang G."/>
        </authorList>
    </citation>
    <scope>NUCLEOTIDE SEQUENCE [MRNA]</scope>
</reference>
<protein>
    <recommendedName>
        <fullName>Beta-defensin 29</fullName>
        <shortName>BD-29</shortName>
    </recommendedName>
    <alternativeName>
        <fullName>Defensin, beta 29</fullName>
    </alternativeName>
</protein>
<evidence type="ECO:0000250" key="1"/>
<evidence type="ECO:0000255" key="2"/>
<evidence type="ECO:0000305" key="3"/>
<dbReference type="EMBL" id="AY621360">
    <property type="protein sequence ID" value="AAT51899.1"/>
    <property type="molecule type" value="mRNA"/>
</dbReference>
<dbReference type="RefSeq" id="NP_001032445.1">
    <property type="nucleotide sequence ID" value="NM_001037368.2"/>
</dbReference>
<dbReference type="RefSeq" id="XP_063140567.1">
    <property type="nucleotide sequence ID" value="XM_063284497.1"/>
</dbReference>
<dbReference type="RefSeq" id="XP_063140568.1">
    <property type="nucleotide sequence ID" value="XM_063284498.1"/>
</dbReference>
<dbReference type="SMR" id="Q32ZG3"/>
<dbReference type="FunCoup" id="Q32ZG3">
    <property type="interactions" value="1"/>
</dbReference>
<dbReference type="STRING" id="10116.ENSRNOP00000032037"/>
<dbReference type="GlyGen" id="Q32ZG3">
    <property type="glycosylation" value="1 site"/>
</dbReference>
<dbReference type="PaxDb" id="10116-ENSRNOP00000032037"/>
<dbReference type="Ensembl" id="ENSRNOT00000031683.5">
    <property type="protein sequence ID" value="ENSRNOP00000032037.3"/>
    <property type="gene ID" value="ENSRNOG00000023195.5"/>
</dbReference>
<dbReference type="GeneID" id="641519"/>
<dbReference type="KEGG" id="rno:641519"/>
<dbReference type="UCSC" id="RGD:1564030">
    <property type="organism name" value="rat"/>
</dbReference>
<dbReference type="AGR" id="RGD:1564030"/>
<dbReference type="CTD" id="75400"/>
<dbReference type="RGD" id="1564030">
    <property type="gene designation" value="Defb29"/>
</dbReference>
<dbReference type="eggNOG" id="ENOG502TF8H">
    <property type="taxonomic scope" value="Eukaryota"/>
</dbReference>
<dbReference type="GeneTree" id="ENSGT00390000001502"/>
<dbReference type="HOGENOM" id="CLU_2482789_0_0_1"/>
<dbReference type="InParanoid" id="Q32ZG3"/>
<dbReference type="OMA" id="PCLMTIV"/>
<dbReference type="OrthoDB" id="9836790at2759"/>
<dbReference type="PhylomeDB" id="Q32ZG3"/>
<dbReference type="PRO" id="PR:Q32ZG3"/>
<dbReference type="Proteomes" id="UP000002494">
    <property type="component" value="Chromosome 3"/>
</dbReference>
<dbReference type="Bgee" id="ENSRNOG00000023195">
    <property type="expression patterns" value="Expressed in kidney and 5 other cell types or tissues"/>
</dbReference>
<dbReference type="GO" id="GO:0005576">
    <property type="term" value="C:extracellular region"/>
    <property type="evidence" value="ECO:0007669"/>
    <property type="project" value="UniProtKB-SubCell"/>
</dbReference>
<dbReference type="GO" id="GO:0042742">
    <property type="term" value="P:defense response to bacterium"/>
    <property type="evidence" value="ECO:0007669"/>
    <property type="project" value="UniProtKB-KW"/>
</dbReference>
<dbReference type="GO" id="GO:0045087">
    <property type="term" value="P:innate immune response"/>
    <property type="evidence" value="ECO:0007669"/>
    <property type="project" value="InterPro"/>
</dbReference>
<dbReference type="InterPro" id="IPR025933">
    <property type="entry name" value="Beta_defensin_dom"/>
</dbReference>
<dbReference type="Pfam" id="PF13841">
    <property type="entry name" value="Defensin_beta_2"/>
    <property type="match status" value="1"/>
</dbReference>
<gene>
    <name type="primary">Defb29</name>
</gene>
<proteinExistence type="inferred from homology"/>
<organism>
    <name type="scientific">Rattus norvegicus</name>
    <name type="common">Rat</name>
    <dbReference type="NCBI Taxonomy" id="10116"/>
    <lineage>
        <taxon>Eukaryota</taxon>
        <taxon>Metazoa</taxon>
        <taxon>Chordata</taxon>
        <taxon>Craniata</taxon>
        <taxon>Vertebrata</taxon>
        <taxon>Euteleostomi</taxon>
        <taxon>Mammalia</taxon>
        <taxon>Eutheria</taxon>
        <taxon>Euarchontoglires</taxon>
        <taxon>Glires</taxon>
        <taxon>Rodentia</taxon>
        <taxon>Myomorpha</taxon>
        <taxon>Muroidea</taxon>
        <taxon>Muridae</taxon>
        <taxon>Murinae</taxon>
        <taxon>Rattus</taxon>
    </lineage>
</organism>
<comment type="function">
    <text evidence="1">Has antibacterial activity.</text>
</comment>
<comment type="subcellular location">
    <subcellularLocation>
        <location evidence="1">Secreted</location>
    </subcellularLocation>
</comment>
<comment type="similarity">
    <text evidence="3">Belongs to the beta-defensin family.</text>
</comment>
<sequence length="78" mass="8991">MPVTKPYFVTVAVLLILVDKTTGGLFGLRSGKRREPWVSCELYQGSCRNACQKYEIQYLTCPKKRKCCLKFPMKITRV</sequence>
<keyword id="KW-0044">Antibiotic</keyword>
<keyword id="KW-0929">Antimicrobial</keyword>
<keyword id="KW-0211">Defensin</keyword>
<keyword id="KW-1015">Disulfide bond</keyword>
<keyword id="KW-1185">Reference proteome</keyword>
<keyword id="KW-0964">Secreted</keyword>
<keyword id="KW-0732">Signal</keyword>
<name>DFB29_RAT</name>
<accession>Q32ZG3</accession>